<reference key="1">
    <citation type="journal article" date="2003" name="Nature">
        <title>Genome divergence in two Prochlorococcus ecotypes reflects oceanic niche differentiation.</title>
        <authorList>
            <person name="Rocap G."/>
            <person name="Larimer F.W."/>
            <person name="Lamerdin J.E."/>
            <person name="Malfatti S."/>
            <person name="Chain P."/>
            <person name="Ahlgren N.A."/>
            <person name="Arellano A."/>
            <person name="Coleman M."/>
            <person name="Hauser L."/>
            <person name="Hess W.R."/>
            <person name="Johnson Z.I."/>
            <person name="Land M.L."/>
            <person name="Lindell D."/>
            <person name="Post A.F."/>
            <person name="Regala W."/>
            <person name="Shah M."/>
            <person name="Shaw S.L."/>
            <person name="Steglich C."/>
            <person name="Sullivan M.B."/>
            <person name="Ting C.S."/>
            <person name="Tolonen A."/>
            <person name="Webb E.A."/>
            <person name="Zinser E.R."/>
            <person name="Chisholm S.W."/>
        </authorList>
    </citation>
    <scope>NUCLEOTIDE SEQUENCE [LARGE SCALE GENOMIC DNA]</scope>
    <source>
        <strain>CCMP1986 / NIES-2087 / MED4</strain>
    </source>
</reference>
<sequence>MSNHDPISDMLTRIRNASQKKHTSTAIPASKMSLSIAKVLQKEGFITDINEEGEGYKSQIVLGLKYSGKNKFPTIRSMQRVSKPGLRVYKNTKGLPKVLGGLGVAIVSTSKGVMSDRDARKQGIGGEVLCYVY</sequence>
<protein>
    <recommendedName>
        <fullName evidence="1">Small ribosomal subunit protein uS8</fullName>
    </recommendedName>
    <alternativeName>
        <fullName evidence="2">30S ribosomal protein S8</fullName>
    </alternativeName>
</protein>
<dbReference type="EMBL" id="BX548174">
    <property type="protein sequence ID" value="CAE20004.1"/>
    <property type="molecule type" value="Genomic_DNA"/>
</dbReference>
<dbReference type="RefSeq" id="WP_011133173.1">
    <property type="nucleotide sequence ID" value="NC_005072.1"/>
</dbReference>
<dbReference type="SMR" id="Q7UZV7"/>
<dbReference type="STRING" id="59919.PMM1545"/>
<dbReference type="KEGG" id="pmm:PMM1545"/>
<dbReference type="eggNOG" id="COG0096">
    <property type="taxonomic scope" value="Bacteria"/>
</dbReference>
<dbReference type="HOGENOM" id="CLU_098428_0_2_3"/>
<dbReference type="OrthoDB" id="9802617at2"/>
<dbReference type="Proteomes" id="UP000001026">
    <property type="component" value="Chromosome"/>
</dbReference>
<dbReference type="GO" id="GO:1990904">
    <property type="term" value="C:ribonucleoprotein complex"/>
    <property type="evidence" value="ECO:0007669"/>
    <property type="project" value="UniProtKB-KW"/>
</dbReference>
<dbReference type="GO" id="GO:0005840">
    <property type="term" value="C:ribosome"/>
    <property type="evidence" value="ECO:0007669"/>
    <property type="project" value="UniProtKB-KW"/>
</dbReference>
<dbReference type="GO" id="GO:0019843">
    <property type="term" value="F:rRNA binding"/>
    <property type="evidence" value="ECO:0007669"/>
    <property type="project" value="UniProtKB-UniRule"/>
</dbReference>
<dbReference type="GO" id="GO:0003735">
    <property type="term" value="F:structural constituent of ribosome"/>
    <property type="evidence" value="ECO:0007669"/>
    <property type="project" value="InterPro"/>
</dbReference>
<dbReference type="GO" id="GO:0006412">
    <property type="term" value="P:translation"/>
    <property type="evidence" value="ECO:0007669"/>
    <property type="project" value="UniProtKB-UniRule"/>
</dbReference>
<dbReference type="FunFam" id="3.30.1370.30:FF:000002">
    <property type="entry name" value="30S ribosomal protein S8"/>
    <property type="match status" value="1"/>
</dbReference>
<dbReference type="FunFam" id="3.30.1490.10:FF:000001">
    <property type="entry name" value="30S ribosomal protein S8"/>
    <property type="match status" value="1"/>
</dbReference>
<dbReference type="Gene3D" id="3.30.1370.30">
    <property type="match status" value="1"/>
</dbReference>
<dbReference type="Gene3D" id="3.30.1490.10">
    <property type="match status" value="1"/>
</dbReference>
<dbReference type="HAMAP" id="MF_01302_B">
    <property type="entry name" value="Ribosomal_uS8_B"/>
    <property type="match status" value="1"/>
</dbReference>
<dbReference type="InterPro" id="IPR000630">
    <property type="entry name" value="Ribosomal_uS8"/>
</dbReference>
<dbReference type="InterPro" id="IPR047863">
    <property type="entry name" value="Ribosomal_uS8_CS"/>
</dbReference>
<dbReference type="InterPro" id="IPR035987">
    <property type="entry name" value="Ribosomal_uS8_sf"/>
</dbReference>
<dbReference type="NCBIfam" id="NF001109">
    <property type="entry name" value="PRK00136.1"/>
    <property type="match status" value="1"/>
</dbReference>
<dbReference type="PANTHER" id="PTHR11758">
    <property type="entry name" value="40S RIBOSOMAL PROTEIN S15A"/>
    <property type="match status" value="1"/>
</dbReference>
<dbReference type="Pfam" id="PF00410">
    <property type="entry name" value="Ribosomal_S8"/>
    <property type="match status" value="1"/>
</dbReference>
<dbReference type="SUPFAM" id="SSF56047">
    <property type="entry name" value="Ribosomal protein S8"/>
    <property type="match status" value="1"/>
</dbReference>
<dbReference type="PROSITE" id="PS00053">
    <property type="entry name" value="RIBOSOMAL_S8"/>
    <property type="match status" value="1"/>
</dbReference>
<keyword id="KW-0687">Ribonucleoprotein</keyword>
<keyword id="KW-0689">Ribosomal protein</keyword>
<keyword id="KW-0694">RNA-binding</keyword>
<keyword id="KW-0699">rRNA-binding</keyword>
<gene>
    <name evidence="1" type="primary">rpsH</name>
    <name evidence="1" type="synonym">rps8</name>
    <name type="ordered locus">PMM1545</name>
</gene>
<organism>
    <name type="scientific">Prochlorococcus marinus subsp. pastoris (strain CCMP1986 / NIES-2087 / MED4)</name>
    <dbReference type="NCBI Taxonomy" id="59919"/>
    <lineage>
        <taxon>Bacteria</taxon>
        <taxon>Bacillati</taxon>
        <taxon>Cyanobacteriota</taxon>
        <taxon>Cyanophyceae</taxon>
        <taxon>Synechococcales</taxon>
        <taxon>Prochlorococcaceae</taxon>
        <taxon>Prochlorococcus</taxon>
    </lineage>
</organism>
<comment type="function">
    <text evidence="1">One of the primary rRNA binding proteins, it binds directly to 16S rRNA central domain where it helps coordinate assembly of the platform of the 30S subunit.</text>
</comment>
<comment type="subunit">
    <text evidence="1">Part of the 30S ribosomal subunit. Contacts proteins S5 and S12.</text>
</comment>
<comment type="similarity">
    <text evidence="1">Belongs to the universal ribosomal protein uS8 family.</text>
</comment>
<evidence type="ECO:0000255" key="1">
    <source>
        <dbReference type="HAMAP-Rule" id="MF_01302"/>
    </source>
</evidence>
<evidence type="ECO:0000305" key="2"/>
<proteinExistence type="inferred from homology"/>
<name>RS8_PROMP</name>
<feature type="chain" id="PRO_0000126465" description="Small ribosomal subunit protein uS8">
    <location>
        <begin position="1"/>
        <end position="133"/>
    </location>
</feature>
<accession>Q7UZV7</accession>